<dbReference type="EMBL" id="CP001113">
    <property type="protein sequence ID" value="ACF64451.1"/>
    <property type="molecule type" value="Genomic_DNA"/>
</dbReference>
<dbReference type="RefSeq" id="WP_000450405.1">
    <property type="nucleotide sequence ID" value="NZ_CCMR01000002.1"/>
</dbReference>
<dbReference type="SMR" id="B4SX27"/>
<dbReference type="KEGG" id="see:SNSL254_A2236"/>
<dbReference type="HOGENOM" id="CLU_153146_0_0_6"/>
<dbReference type="Proteomes" id="UP000008824">
    <property type="component" value="Chromosome"/>
</dbReference>
<dbReference type="GO" id="GO:0005829">
    <property type="term" value="C:cytosol"/>
    <property type="evidence" value="ECO:0007669"/>
    <property type="project" value="TreeGrafter"/>
</dbReference>
<dbReference type="HAMAP" id="MF_00683">
    <property type="entry name" value="Pole_loc_TmaR"/>
    <property type="match status" value="1"/>
</dbReference>
<dbReference type="InterPro" id="IPR007458">
    <property type="entry name" value="DUF496"/>
</dbReference>
<dbReference type="InterPro" id="IPR053375">
    <property type="entry name" value="UPF0265"/>
</dbReference>
<dbReference type="NCBIfam" id="NF003844">
    <property type="entry name" value="PRK05423.1"/>
    <property type="match status" value="1"/>
</dbReference>
<dbReference type="NCBIfam" id="NF040881">
    <property type="entry name" value="PTS_reg_TmaR"/>
    <property type="match status" value="1"/>
</dbReference>
<dbReference type="PANTHER" id="PTHR39591">
    <property type="entry name" value="UPF0265 PROTEIN YEEX"/>
    <property type="match status" value="1"/>
</dbReference>
<dbReference type="PANTHER" id="PTHR39591:SF1">
    <property type="entry name" value="UPF0265 PROTEIN YEEX"/>
    <property type="match status" value="1"/>
</dbReference>
<dbReference type="Pfam" id="PF04363">
    <property type="entry name" value="DUF496"/>
    <property type="match status" value="1"/>
</dbReference>
<dbReference type="PIRSF" id="PIRSF028773">
    <property type="entry name" value="UCP028773"/>
    <property type="match status" value="1"/>
</dbReference>
<comment type="function">
    <text evidence="1">Pole-localizer protein involved in the regulation of several cellular processes.</text>
</comment>
<comment type="subcellular location">
    <subcellularLocation>
        <location evidence="1">Cytoplasm</location>
    </subcellularLocation>
    <text evidence="1">Forms clusters that localize mainly near one pole of the cell.</text>
</comment>
<comment type="similarity">
    <text evidence="1">Belongs to the pole-localizer TmaR family.</text>
</comment>
<accession>B4SX27</accession>
<sequence length="111" mass="13073">METTKPSFQDVLEFVRLFRRKNKLQREIQDIEKKIRDNQKRVLLLDNLSDYIKPGMSVEAIQGIIASMKSDYEDRVDDYIIKNAEISKERRDISKKLKAMGEMKHADVKAE</sequence>
<feature type="chain" id="PRO_1000131776" description="Pole-localizer protein TmaR">
    <location>
        <begin position="1"/>
        <end position="111"/>
    </location>
</feature>
<feature type="coiled-coil region" evidence="1">
    <location>
        <begin position="14"/>
        <end position="41"/>
    </location>
</feature>
<protein>
    <recommendedName>
        <fullName evidence="1">Pole-localizer protein TmaR</fullName>
    </recommendedName>
</protein>
<reference key="1">
    <citation type="journal article" date="2011" name="J. Bacteriol.">
        <title>Comparative genomics of 28 Salmonella enterica isolates: evidence for CRISPR-mediated adaptive sublineage evolution.</title>
        <authorList>
            <person name="Fricke W.F."/>
            <person name="Mammel M.K."/>
            <person name="McDermott P.F."/>
            <person name="Tartera C."/>
            <person name="White D.G."/>
            <person name="Leclerc J.E."/>
            <person name="Ravel J."/>
            <person name="Cebula T.A."/>
        </authorList>
    </citation>
    <scope>NUCLEOTIDE SEQUENCE [LARGE SCALE GENOMIC DNA]</scope>
    <source>
        <strain>SL254</strain>
    </source>
</reference>
<proteinExistence type="inferred from homology"/>
<organism>
    <name type="scientific">Salmonella newport (strain SL254)</name>
    <dbReference type="NCBI Taxonomy" id="423368"/>
    <lineage>
        <taxon>Bacteria</taxon>
        <taxon>Pseudomonadati</taxon>
        <taxon>Pseudomonadota</taxon>
        <taxon>Gammaproteobacteria</taxon>
        <taxon>Enterobacterales</taxon>
        <taxon>Enterobacteriaceae</taxon>
        <taxon>Salmonella</taxon>
    </lineage>
</organism>
<evidence type="ECO:0000255" key="1">
    <source>
        <dbReference type="HAMAP-Rule" id="MF_00683"/>
    </source>
</evidence>
<keyword id="KW-0175">Coiled coil</keyword>
<keyword id="KW-0963">Cytoplasm</keyword>
<name>TMAR_SALNS</name>
<gene>
    <name evidence="1" type="primary">tmaR</name>
    <name type="ordered locus">SNSL254_A2236</name>
</gene>